<protein>
    <recommendedName>
        <fullName evidence="1">Elongation factor P</fullName>
        <shortName evidence="1">EF-P</shortName>
    </recommendedName>
</protein>
<keyword id="KW-0963">Cytoplasm</keyword>
<keyword id="KW-0251">Elongation factor</keyword>
<keyword id="KW-0379">Hydroxylation</keyword>
<keyword id="KW-0648">Protein biosynthesis</keyword>
<feature type="chain" id="PRO_1000010755" description="Elongation factor P">
    <location>
        <begin position="1"/>
        <end position="188"/>
    </location>
</feature>
<feature type="modified residue" description="N6-(3,6-diaminohexanoyl)-5-hydroxylysine" evidence="1">
    <location>
        <position position="34"/>
    </location>
</feature>
<dbReference type="EMBL" id="CP000671">
    <property type="protein sequence ID" value="ABQ97760.1"/>
    <property type="molecule type" value="Genomic_DNA"/>
</dbReference>
<dbReference type="SMR" id="A5UAF9"/>
<dbReference type="KEGG" id="hip:CGSHiEE_01390"/>
<dbReference type="HOGENOM" id="CLU_074944_0_0_6"/>
<dbReference type="UniPathway" id="UPA00345"/>
<dbReference type="GO" id="GO:0005737">
    <property type="term" value="C:cytoplasm"/>
    <property type="evidence" value="ECO:0007669"/>
    <property type="project" value="UniProtKB-SubCell"/>
</dbReference>
<dbReference type="GO" id="GO:0003746">
    <property type="term" value="F:translation elongation factor activity"/>
    <property type="evidence" value="ECO:0007669"/>
    <property type="project" value="UniProtKB-UniRule"/>
</dbReference>
<dbReference type="GO" id="GO:0043043">
    <property type="term" value="P:peptide biosynthetic process"/>
    <property type="evidence" value="ECO:0007669"/>
    <property type="project" value="InterPro"/>
</dbReference>
<dbReference type="CDD" id="cd04470">
    <property type="entry name" value="S1_EF-P_repeat_1"/>
    <property type="match status" value="1"/>
</dbReference>
<dbReference type="CDD" id="cd05794">
    <property type="entry name" value="S1_EF-P_repeat_2"/>
    <property type="match status" value="1"/>
</dbReference>
<dbReference type="FunFam" id="2.30.30.30:FF:000003">
    <property type="entry name" value="Elongation factor P"/>
    <property type="match status" value="1"/>
</dbReference>
<dbReference type="FunFam" id="2.40.50.140:FF:000004">
    <property type="entry name" value="Elongation factor P"/>
    <property type="match status" value="1"/>
</dbReference>
<dbReference type="FunFam" id="2.40.50.140:FF:000009">
    <property type="entry name" value="Elongation factor P"/>
    <property type="match status" value="1"/>
</dbReference>
<dbReference type="Gene3D" id="2.30.30.30">
    <property type="match status" value="1"/>
</dbReference>
<dbReference type="Gene3D" id="2.40.50.140">
    <property type="entry name" value="Nucleic acid-binding proteins"/>
    <property type="match status" value="2"/>
</dbReference>
<dbReference type="HAMAP" id="MF_00141">
    <property type="entry name" value="EF_P"/>
    <property type="match status" value="1"/>
</dbReference>
<dbReference type="InterPro" id="IPR015365">
    <property type="entry name" value="Elong-fact-P_C"/>
</dbReference>
<dbReference type="InterPro" id="IPR012340">
    <property type="entry name" value="NA-bd_OB-fold"/>
</dbReference>
<dbReference type="InterPro" id="IPR014722">
    <property type="entry name" value="Rib_uL2_dom2"/>
</dbReference>
<dbReference type="InterPro" id="IPR020599">
    <property type="entry name" value="Transl_elong_fac_P/YeiP"/>
</dbReference>
<dbReference type="InterPro" id="IPR013185">
    <property type="entry name" value="Transl_elong_KOW-like"/>
</dbReference>
<dbReference type="InterPro" id="IPR001059">
    <property type="entry name" value="Transl_elong_P/YeiP_cen"/>
</dbReference>
<dbReference type="InterPro" id="IPR013852">
    <property type="entry name" value="Transl_elong_P/YeiP_CS"/>
</dbReference>
<dbReference type="InterPro" id="IPR011768">
    <property type="entry name" value="Transl_elongation_fac_P"/>
</dbReference>
<dbReference type="InterPro" id="IPR008991">
    <property type="entry name" value="Translation_prot_SH3-like_sf"/>
</dbReference>
<dbReference type="NCBIfam" id="TIGR00038">
    <property type="entry name" value="efp"/>
    <property type="match status" value="1"/>
</dbReference>
<dbReference type="NCBIfam" id="NF001810">
    <property type="entry name" value="PRK00529.1"/>
    <property type="match status" value="1"/>
</dbReference>
<dbReference type="PANTHER" id="PTHR30053">
    <property type="entry name" value="ELONGATION FACTOR P"/>
    <property type="match status" value="1"/>
</dbReference>
<dbReference type="PANTHER" id="PTHR30053:SF12">
    <property type="entry name" value="ELONGATION FACTOR P (EF-P) FAMILY PROTEIN"/>
    <property type="match status" value="1"/>
</dbReference>
<dbReference type="Pfam" id="PF01132">
    <property type="entry name" value="EFP"/>
    <property type="match status" value="1"/>
</dbReference>
<dbReference type="Pfam" id="PF08207">
    <property type="entry name" value="EFP_N"/>
    <property type="match status" value="1"/>
</dbReference>
<dbReference type="Pfam" id="PF09285">
    <property type="entry name" value="Elong-fact-P_C"/>
    <property type="match status" value="1"/>
</dbReference>
<dbReference type="PIRSF" id="PIRSF005901">
    <property type="entry name" value="EF-P"/>
    <property type="match status" value="1"/>
</dbReference>
<dbReference type="SMART" id="SM01185">
    <property type="entry name" value="EFP"/>
    <property type="match status" value="1"/>
</dbReference>
<dbReference type="SMART" id="SM00841">
    <property type="entry name" value="Elong-fact-P_C"/>
    <property type="match status" value="1"/>
</dbReference>
<dbReference type="SUPFAM" id="SSF50249">
    <property type="entry name" value="Nucleic acid-binding proteins"/>
    <property type="match status" value="2"/>
</dbReference>
<dbReference type="SUPFAM" id="SSF50104">
    <property type="entry name" value="Translation proteins SH3-like domain"/>
    <property type="match status" value="1"/>
</dbReference>
<dbReference type="PROSITE" id="PS01275">
    <property type="entry name" value="EFP"/>
    <property type="match status" value="1"/>
</dbReference>
<comment type="function">
    <text evidence="1">Involved in peptide bond synthesis. Alleviates ribosome stalling that occurs when 3 or more consecutive Pro residues or the sequence PPG is present in a protein, possibly by augmenting the peptidyl transferase activity of the ribosome. Modification of Lys-34 is required for alleviation.</text>
</comment>
<comment type="pathway">
    <text evidence="1">Protein biosynthesis; polypeptide chain elongation.</text>
</comment>
<comment type="subcellular location">
    <subcellularLocation>
        <location evidence="1">Cytoplasm</location>
    </subcellularLocation>
</comment>
<comment type="PTM">
    <text evidence="1">May be beta-lysylated on the epsilon-amino group of Lys-34 by the combined action of EpmA and EpmB, and then hydroxylated on the C5 position of the same residue by EpmC (if this protein is present). Lysylation is critical for the stimulatory effect of EF-P on peptide-bond formation. The lysylation moiety may extend toward the peptidyltransferase center and stabilize the terminal 3-CCA end of the tRNA. Hydroxylation of the C5 position on Lys-34 may allow additional potential stabilizing hydrogen-bond interactions with the P-tRNA.</text>
</comment>
<comment type="similarity">
    <text evidence="1">Belongs to the elongation factor P family.</text>
</comment>
<evidence type="ECO:0000255" key="1">
    <source>
        <dbReference type="HAMAP-Rule" id="MF_00141"/>
    </source>
</evidence>
<reference key="1">
    <citation type="journal article" date="2007" name="Genome Biol.">
        <title>Characterization and modeling of the Haemophilus influenzae core and supragenomes based on the complete genomic sequences of Rd and 12 clinical nontypeable strains.</title>
        <authorList>
            <person name="Hogg J.S."/>
            <person name="Hu F.Z."/>
            <person name="Janto B."/>
            <person name="Boissy R."/>
            <person name="Hayes J."/>
            <person name="Keefe R."/>
            <person name="Post J.C."/>
            <person name="Ehrlich G.D."/>
        </authorList>
    </citation>
    <scope>NUCLEOTIDE SEQUENCE [LARGE SCALE GENOMIC DNA]</scope>
    <source>
        <strain>PittEE</strain>
    </source>
</reference>
<name>EFP_HAEIE</name>
<gene>
    <name evidence="1" type="primary">efp</name>
    <name type="ordered locus">CGSHiEE_01390</name>
</gene>
<organism>
    <name type="scientific">Haemophilus influenzae (strain PittEE)</name>
    <dbReference type="NCBI Taxonomy" id="374930"/>
    <lineage>
        <taxon>Bacteria</taxon>
        <taxon>Pseudomonadati</taxon>
        <taxon>Pseudomonadota</taxon>
        <taxon>Gammaproteobacteria</taxon>
        <taxon>Pasteurellales</taxon>
        <taxon>Pasteurellaceae</taxon>
        <taxon>Haemophilus</taxon>
    </lineage>
</organism>
<accession>A5UAF9</accession>
<proteinExistence type="inferred from homology"/>
<sequence length="188" mass="20612">MATYTTSDFKPGLKFMQDGEPCVIVENEFVKPGKGQAFTRTRIRKLISGKVLDVNFKSGTSVEAADVMDLNLTYSYKDDAFWYFMHPETFEQYSADAKAVGDAEKWLLDQADCIVTLWNGAPITVTPPNFVELEIVDTDPGLKGDTAGTGGKPATLSTGAVVKVPLFVQIGEVIRVDTRSGEYVSRVK</sequence>